<name>LSPA_VIBPA</name>
<gene>
    <name evidence="1" type="primary">lspA</name>
    <name type="ordered locus">VP0535</name>
</gene>
<reference key="1">
    <citation type="journal article" date="2003" name="Lancet">
        <title>Genome sequence of Vibrio parahaemolyticus: a pathogenic mechanism distinct from that of V. cholerae.</title>
        <authorList>
            <person name="Makino K."/>
            <person name="Oshima K."/>
            <person name="Kurokawa K."/>
            <person name="Yokoyama K."/>
            <person name="Uda T."/>
            <person name="Tagomori K."/>
            <person name="Iijima Y."/>
            <person name="Najima M."/>
            <person name="Nakano M."/>
            <person name="Yamashita A."/>
            <person name="Kubota Y."/>
            <person name="Kimura S."/>
            <person name="Yasunaga T."/>
            <person name="Honda T."/>
            <person name="Shinagawa H."/>
            <person name="Hattori M."/>
            <person name="Iida T."/>
        </authorList>
    </citation>
    <scope>NUCLEOTIDE SEQUENCE [LARGE SCALE GENOMIC DNA]</scope>
    <source>
        <strain>RIMD 2210633</strain>
    </source>
</reference>
<protein>
    <recommendedName>
        <fullName evidence="1">Lipoprotein signal peptidase</fullName>
        <ecNumber evidence="1">3.4.23.36</ecNumber>
    </recommendedName>
    <alternativeName>
        <fullName evidence="1">Prolipoprotein signal peptidase</fullName>
    </alternativeName>
    <alternativeName>
        <fullName evidence="1">Signal peptidase II</fullName>
        <shortName evidence="1">SPase II</shortName>
    </alternativeName>
</protein>
<evidence type="ECO:0000255" key="1">
    <source>
        <dbReference type="HAMAP-Rule" id="MF_00161"/>
    </source>
</evidence>
<sequence>MSEKALTLKQSGVRWLWLAIVIFLADIGIKYVVMNNMGYGWANRIEILPFFNLLYVHNYGAAFSFLSDQAGWQRWLFTGIAFVVTGLLTYWMSKLPAKEKWNNIAYAMIIGGAVGNVFDRVIHGFVVDYLDFYWGNYHWPAFNLADMAICLGAAMIILDGFRKKDTAKA</sequence>
<comment type="function">
    <text evidence="1">This protein specifically catalyzes the removal of signal peptides from prolipoproteins.</text>
</comment>
<comment type="catalytic activity">
    <reaction evidence="1">
        <text>Release of signal peptides from bacterial membrane prolipoproteins. Hydrolyzes -Xaa-Yaa-Zaa-|-(S,diacylglyceryl)Cys-, in which Xaa is hydrophobic (preferably Leu), and Yaa (Ala or Ser) and Zaa (Gly or Ala) have small, neutral side chains.</text>
        <dbReference type="EC" id="3.4.23.36"/>
    </reaction>
</comment>
<comment type="pathway">
    <text evidence="1">Protein modification; lipoprotein biosynthesis (signal peptide cleavage).</text>
</comment>
<comment type="subcellular location">
    <subcellularLocation>
        <location evidence="1">Cell inner membrane</location>
        <topology evidence="1">Multi-pass membrane protein</topology>
    </subcellularLocation>
</comment>
<comment type="similarity">
    <text evidence="1">Belongs to the peptidase A8 family.</text>
</comment>
<accession>Q87S89</accession>
<organism>
    <name type="scientific">Vibrio parahaemolyticus serotype O3:K6 (strain RIMD 2210633)</name>
    <dbReference type="NCBI Taxonomy" id="223926"/>
    <lineage>
        <taxon>Bacteria</taxon>
        <taxon>Pseudomonadati</taxon>
        <taxon>Pseudomonadota</taxon>
        <taxon>Gammaproteobacteria</taxon>
        <taxon>Vibrionales</taxon>
        <taxon>Vibrionaceae</taxon>
        <taxon>Vibrio</taxon>
    </lineage>
</organism>
<feature type="chain" id="PRO_0000178831" description="Lipoprotein signal peptidase">
    <location>
        <begin position="1"/>
        <end position="169"/>
    </location>
</feature>
<feature type="transmembrane region" description="Helical" evidence="1">
    <location>
        <begin position="15"/>
        <end position="35"/>
    </location>
</feature>
<feature type="transmembrane region" description="Helical" evidence="1">
    <location>
        <begin position="47"/>
        <end position="67"/>
    </location>
</feature>
<feature type="transmembrane region" description="Helical" evidence="1">
    <location>
        <begin position="75"/>
        <end position="95"/>
    </location>
</feature>
<feature type="transmembrane region" description="Helical" evidence="1">
    <location>
        <begin position="107"/>
        <end position="127"/>
    </location>
</feature>
<feature type="transmembrane region" description="Helical" evidence="1">
    <location>
        <begin position="141"/>
        <end position="161"/>
    </location>
</feature>
<feature type="active site" evidence="1">
    <location>
        <position position="128"/>
    </location>
</feature>
<feature type="active site" evidence="1">
    <location>
        <position position="146"/>
    </location>
</feature>
<keyword id="KW-0064">Aspartyl protease</keyword>
<keyword id="KW-0997">Cell inner membrane</keyword>
<keyword id="KW-1003">Cell membrane</keyword>
<keyword id="KW-0378">Hydrolase</keyword>
<keyword id="KW-0472">Membrane</keyword>
<keyword id="KW-0645">Protease</keyword>
<keyword id="KW-0812">Transmembrane</keyword>
<keyword id="KW-1133">Transmembrane helix</keyword>
<proteinExistence type="inferred from homology"/>
<dbReference type="EC" id="3.4.23.36" evidence="1"/>
<dbReference type="EMBL" id="BA000031">
    <property type="protein sequence ID" value="BAC58798.1"/>
    <property type="molecule type" value="Genomic_DNA"/>
</dbReference>
<dbReference type="RefSeq" id="NP_796914.1">
    <property type="nucleotide sequence ID" value="NC_004603.1"/>
</dbReference>
<dbReference type="RefSeq" id="WP_005460289.1">
    <property type="nucleotide sequence ID" value="NC_004603.1"/>
</dbReference>
<dbReference type="SMR" id="Q87S89"/>
<dbReference type="MEROPS" id="A08.001"/>
<dbReference type="GeneID" id="1188003"/>
<dbReference type="KEGG" id="vpa:VP0535"/>
<dbReference type="PATRIC" id="fig|223926.6.peg.508"/>
<dbReference type="eggNOG" id="COG0597">
    <property type="taxonomic scope" value="Bacteria"/>
</dbReference>
<dbReference type="HOGENOM" id="CLU_083252_4_0_6"/>
<dbReference type="UniPathway" id="UPA00665"/>
<dbReference type="Proteomes" id="UP000002493">
    <property type="component" value="Chromosome 1"/>
</dbReference>
<dbReference type="GO" id="GO:0005886">
    <property type="term" value="C:plasma membrane"/>
    <property type="evidence" value="ECO:0007669"/>
    <property type="project" value="UniProtKB-SubCell"/>
</dbReference>
<dbReference type="GO" id="GO:0004190">
    <property type="term" value="F:aspartic-type endopeptidase activity"/>
    <property type="evidence" value="ECO:0007669"/>
    <property type="project" value="UniProtKB-UniRule"/>
</dbReference>
<dbReference type="GO" id="GO:0006508">
    <property type="term" value="P:proteolysis"/>
    <property type="evidence" value="ECO:0007669"/>
    <property type="project" value="UniProtKB-KW"/>
</dbReference>
<dbReference type="HAMAP" id="MF_00161">
    <property type="entry name" value="LspA"/>
    <property type="match status" value="1"/>
</dbReference>
<dbReference type="InterPro" id="IPR001872">
    <property type="entry name" value="Peptidase_A8"/>
</dbReference>
<dbReference type="NCBIfam" id="TIGR00077">
    <property type="entry name" value="lspA"/>
    <property type="match status" value="1"/>
</dbReference>
<dbReference type="PANTHER" id="PTHR33695">
    <property type="entry name" value="LIPOPROTEIN SIGNAL PEPTIDASE"/>
    <property type="match status" value="1"/>
</dbReference>
<dbReference type="PANTHER" id="PTHR33695:SF1">
    <property type="entry name" value="LIPOPROTEIN SIGNAL PEPTIDASE"/>
    <property type="match status" value="1"/>
</dbReference>
<dbReference type="Pfam" id="PF01252">
    <property type="entry name" value="Peptidase_A8"/>
    <property type="match status" value="1"/>
</dbReference>
<dbReference type="PRINTS" id="PR00781">
    <property type="entry name" value="LIPOSIGPTASE"/>
</dbReference>
<dbReference type="PROSITE" id="PS00855">
    <property type="entry name" value="SPASE_II"/>
    <property type="match status" value="1"/>
</dbReference>